<accession>A4GGE0</accession>
<accession>A8W7X7</accession>
<comment type="function">
    <text evidence="1">One of the primary rRNA binding proteins, it binds directly to 16S rRNA central domain where it helps coordinate assembly of the platform of the 30S subunit.</text>
</comment>
<comment type="subunit">
    <text evidence="1">Part of the 30S ribosomal subunit.</text>
</comment>
<comment type="subcellular location">
    <subcellularLocation>
        <location>Plastid</location>
        <location>Chloroplast</location>
    </subcellularLocation>
</comment>
<comment type="similarity">
    <text evidence="2">Belongs to the universal ribosomal protein uS8 family.</text>
</comment>
<name>RR8_PHAVU</name>
<geneLocation type="chloroplast"/>
<organism>
    <name type="scientific">Phaseolus vulgaris</name>
    <name type="common">Kidney bean</name>
    <name type="synonym">French bean</name>
    <dbReference type="NCBI Taxonomy" id="3885"/>
    <lineage>
        <taxon>Eukaryota</taxon>
        <taxon>Viridiplantae</taxon>
        <taxon>Streptophyta</taxon>
        <taxon>Embryophyta</taxon>
        <taxon>Tracheophyta</taxon>
        <taxon>Spermatophyta</taxon>
        <taxon>Magnoliopsida</taxon>
        <taxon>eudicotyledons</taxon>
        <taxon>Gunneridae</taxon>
        <taxon>Pentapetalae</taxon>
        <taxon>rosids</taxon>
        <taxon>fabids</taxon>
        <taxon>Fabales</taxon>
        <taxon>Fabaceae</taxon>
        <taxon>Papilionoideae</taxon>
        <taxon>50 kb inversion clade</taxon>
        <taxon>NPAAA clade</taxon>
        <taxon>indigoferoid/millettioid clade</taxon>
        <taxon>Phaseoleae</taxon>
        <taxon>Phaseolus</taxon>
    </lineage>
</organism>
<gene>
    <name type="primary">rps8</name>
</gene>
<dbReference type="EMBL" id="DQ886273">
    <property type="protein sequence ID" value="ABH88120.1"/>
    <property type="molecule type" value="Genomic_DNA"/>
</dbReference>
<dbReference type="EMBL" id="EU196765">
    <property type="protein sequence ID" value="ABW22749.1"/>
    <property type="molecule type" value="Genomic_DNA"/>
</dbReference>
<dbReference type="RefSeq" id="YP_001122841.1">
    <property type="nucleotide sequence ID" value="NC_009259.1"/>
</dbReference>
<dbReference type="SMR" id="A4GGE0"/>
<dbReference type="GeneID" id="4961816"/>
<dbReference type="KEGG" id="pvu:4961816"/>
<dbReference type="eggNOG" id="KOG1754">
    <property type="taxonomic scope" value="Eukaryota"/>
</dbReference>
<dbReference type="GO" id="GO:0009507">
    <property type="term" value="C:chloroplast"/>
    <property type="evidence" value="ECO:0007669"/>
    <property type="project" value="UniProtKB-SubCell"/>
</dbReference>
<dbReference type="GO" id="GO:1990904">
    <property type="term" value="C:ribonucleoprotein complex"/>
    <property type="evidence" value="ECO:0007669"/>
    <property type="project" value="UniProtKB-KW"/>
</dbReference>
<dbReference type="GO" id="GO:0005840">
    <property type="term" value="C:ribosome"/>
    <property type="evidence" value="ECO:0007669"/>
    <property type="project" value="UniProtKB-KW"/>
</dbReference>
<dbReference type="GO" id="GO:0019843">
    <property type="term" value="F:rRNA binding"/>
    <property type="evidence" value="ECO:0007669"/>
    <property type="project" value="UniProtKB-UniRule"/>
</dbReference>
<dbReference type="GO" id="GO:0003735">
    <property type="term" value="F:structural constituent of ribosome"/>
    <property type="evidence" value="ECO:0007669"/>
    <property type="project" value="InterPro"/>
</dbReference>
<dbReference type="GO" id="GO:0006412">
    <property type="term" value="P:translation"/>
    <property type="evidence" value="ECO:0007669"/>
    <property type="project" value="UniProtKB-UniRule"/>
</dbReference>
<dbReference type="FunFam" id="3.30.1490.10:FF:000001">
    <property type="entry name" value="30S ribosomal protein S8"/>
    <property type="match status" value="1"/>
</dbReference>
<dbReference type="Gene3D" id="3.30.1370.30">
    <property type="match status" value="1"/>
</dbReference>
<dbReference type="Gene3D" id="3.30.1490.10">
    <property type="match status" value="1"/>
</dbReference>
<dbReference type="HAMAP" id="MF_01302_B">
    <property type="entry name" value="Ribosomal_uS8_B"/>
    <property type="match status" value="1"/>
</dbReference>
<dbReference type="InterPro" id="IPR000630">
    <property type="entry name" value="Ribosomal_uS8"/>
</dbReference>
<dbReference type="InterPro" id="IPR047863">
    <property type="entry name" value="Ribosomal_uS8_CS"/>
</dbReference>
<dbReference type="InterPro" id="IPR035987">
    <property type="entry name" value="Ribosomal_uS8_sf"/>
</dbReference>
<dbReference type="NCBIfam" id="NF001109">
    <property type="entry name" value="PRK00136.1"/>
    <property type="match status" value="1"/>
</dbReference>
<dbReference type="PANTHER" id="PTHR11758">
    <property type="entry name" value="40S RIBOSOMAL PROTEIN S15A"/>
    <property type="match status" value="1"/>
</dbReference>
<dbReference type="Pfam" id="PF00410">
    <property type="entry name" value="Ribosomal_S8"/>
    <property type="match status" value="1"/>
</dbReference>
<dbReference type="SUPFAM" id="SSF56047">
    <property type="entry name" value="Ribosomal protein S8"/>
    <property type="match status" value="1"/>
</dbReference>
<dbReference type="PROSITE" id="PS00053">
    <property type="entry name" value="RIBOSOMAL_S8"/>
    <property type="match status" value="1"/>
</dbReference>
<reference key="1">
    <citation type="journal article" date="2007" name="BMC Genomics">
        <title>Rapid evolutionary change of common bean (Phaseolus vulgaris L) plastome, and the genomic diversification of legume chloroplasts.</title>
        <authorList>
            <person name="Guo X."/>
            <person name="Castillo-Ramirez S."/>
            <person name="Gonzalez V."/>
            <person name="Bustos P."/>
            <person name="Fernandez-Vazquez J.L."/>
            <person name="Santamaria R.I."/>
            <person name="Arellano J."/>
            <person name="Cevallos M.A."/>
            <person name="Davila G."/>
        </authorList>
    </citation>
    <scope>NUCLEOTIDE SEQUENCE [LARGE SCALE GENOMIC DNA]</scope>
    <source>
        <strain>cv. Negro Jamapa</strain>
    </source>
</reference>
<reference key="2">
    <citation type="submission" date="2007-10" db="EMBL/GenBank/DDBJ databases">
        <title>Complete nucleotide sequence of the plastid genome of the common bean, Phaseolus vulgaris.</title>
        <authorList>
            <person name="Moore M.J."/>
            <person name="Triplett E.W."/>
            <person name="Broughton W.J."/>
            <person name="Soltis P.S."/>
            <person name="Soltis D.E."/>
        </authorList>
    </citation>
    <scope>NUCLEOTIDE SEQUENCE [LARGE SCALE GENOMIC DNA]</scope>
</reference>
<evidence type="ECO:0000250" key="1"/>
<evidence type="ECO:0000305" key="2"/>
<proteinExistence type="inferred from homology"/>
<feature type="chain" id="PRO_0000290989" description="Small ribosomal subunit protein uS8c">
    <location>
        <begin position="1"/>
        <end position="134"/>
    </location>
</feature>
<keyword id="KW-0150">Chloroplast</keyword>
<keyword id="KW-0934">Plastid</keyword>
<keyword id="KW-0687">Ribonucleoprotein</keyword>
<keyword id="KW-0689">Ribosomal protein</keyword>
<keyword id="KW-0694">RNA-binding</keyword>
<keyword id="KW-0699">rRNA-binding</keyword>
<protein>
    <recommendedName>
        <fullName evidence="2">Small ribosomal subunit protein uS8c</fullName>
    </recommendedName>
    <alternativeName>
        <fullName>30S ribosomal protein S8, chloroplastic</fullName>
    </alternativeName>
</protein>
<sequence length="134" mass="15711">MGKDTIANIITYIRNADINKKGMVQLPFTNITEKIVKILLREGFVENIRKHRENDKSFLVLTLRYRRNRKESYKSFLNLKRISTPGLRIYYNYKKIPRILGGMGIVILSTSRGIMTDREARLEKIGGEVLCYIW</sequence>